<gene>
    <name type="primary">WNT-10B</name>
</gene>
<proteinExistence type="inferred from homology"/>
<name>WN10B_PLEJO</name>
<organism>
    <name type="scientific">Plethodon jordani</name>
    <name type="common">Red-cheeked salamander</name>
    <dbReference type="NCBI Taxonomy" id="8336"/>
    <lineage>
        <taxon>Eukaryota</taxon>
        <taxon>Metazoa</taxon>
        <taxon>Chordata</taxon>
        <taxon>Craniata</taxon>
        <taxon>Vertebrata</taxon>
        <taxon>Euteleostomi</taxon>
        <taxon>Amphibia</taxon>
        <taxon>Batrachia</taxon>
        <taxon>Caudata</taxon>
        <taxon>Salamandroidea</taxon>
        <taxon>Plethodontidae</taxon>
        <taxon>Plethodontinae</taxon>
        <taxon>Plethodon</taxon>
    </lineage>
</organism>
<protein>
    <recommendedName>
        <fullName>Protein Wnt-10b</fullName>
    </recommendedName>
</protein>
<evidence type="ECO:0000250" key="1">
    <source>
        <dbReference type="UniProtKB" id="O00744"/>
    </source>
</evidence>
<evidence type="ECO:0000250" key="2">
    <source>
        <dbReference type="UniProtKB" id="P27467"/>
    </source>
</evidence>
<evidence type="ECO:0000250" key="3">
    <source>
        <dbReference type="UniProtKB" id="P28026"/>
    </source>
</evidence>
<evidence type="ECO:0000250" key="4">
    <source>
        <dbReference type="UniProtKB" id="P56704"/>
    </source>
</evidence>
<evidence type="ECO:0000250" key="5">
    <source>
        <dbReference type="UniProtKB" id="Q801F7"/>
    </source>
</evidence>
<evidence type="ECO:0000255" key="6"/>
<evidence type="ECO:0000305" key="7"/>
<comment type="function">
    <text evidence="5">Member of the Wnt ligand gene family that encodes for secreted proteins, which activate the Wnt signaling cascade. Involved in neurogenesis. Performs a partially redundant function with wnt1 in the formation of the midbrain-hindbrain boundary (MHB) organizer.</text>
</comment>
<comment type="subcellular location">
    <subcellularLocation>
        <location evidence="1">Secreted</location>
        <location evidence="1">Extracellular space</location>
        <location evidence="1">Extracellular matrix</location>
    </subcellularLocation>
    <subcellularLocation>
        <location evidence="1">Secreted</location>
    </subcellularLocation>
</comment>
<comment type="PTM">
    <text evidence="2 4">Palmitoleoylation is required for efficient binding to frizzled receptors. Depalmitoleoylation leads to Wnt signaling pathway inhibition.</text>
</comment>
<comment type="similarity">
    <text evidence="7">Belongs to the Wnt family.</text>
</comment>
<accession>P28132</accession>
<sequence length="117" mass="13486">SGSCQFKTCWHVTPEFRLVSSVLKEKFQRATFINSHNKNTGVFHPRRLKKKRLAKELVYFEKSPDFCERDTKVDSPGTQGRVCNKTSHQMDSCGNLCCGRGHNILMQTPSERCNCRF</sequence>
<reference key="1">
    <citation type="journal article" date="1992" name="Proc. Natl. Acad. Sci. U.S.A.">
        <title>Diversification of the Wnt gene family on the ancestral lineage of vertebrates.</title>
        <authorList>
            <person name="Sidow A."/>
        </authorList>
    </citation>
    <scope>NUCLEOTIDE SEQUENCE [GENOMIC DNA]</scope>
</reference>
<keyword id="KW-0217">Developmental protein</keyword>
<keyword id="KW-1015">Disulfide bond</keyword>
<keyword id="KW-0272">Extracellular matrix</keyword>
<keyword id="KW-0325">Glycoprotein</keyword>
<keyword id="KW-0449">Lipoprotein</keyword>
<keyword id="KW-0964">Secreted</keyword>
<keyword id="KW-0879">Wnt signaling pathway</keyword>
<dbReference type="EMBL" id="M91289">
    <property type="protein sequence ID" value="AAA49457.1"/>
    <property type="molecule type" value="Genomic_DNA"/>
</dbReference>
<dbReference type="SMR" id="P28132"/>
<dbReference type="GlyCosmos" id="P28132">
    <property type="glycosylation" value="1 site, No reported glycans"/>
</dbReference>
<dbReference type="GO" id="GO:0005615">
    <property type="term" value="C:extracellular space"/>
    <property type="evidence" value="ECO:0007669"/>
    <property type="project" value="TreeGrafter"/>
</dbReference>
<dbReference type="GO" id="GO:0005125">
    <property type="term" value="F:cytokine activity"/>
    <property type="evidence" value="ECO:0007669"/>
    <property type="project" value="TreeGrafter"/>
</dbReference>
<dbReference type="GO" id="GO:0005109">
    <property type="term" value="F:frizzled binding"/>
    <property type="evidence" value="ECO:0007669"/>
    <property type="project" value="TreeGrafter"/>
</dbReference>
<dbReference type="GO" id="GO:0060070">
    <property type="term" value="P:canonical Wnt signaling pathway"/>
    <property type="evidence" value="ECO:0007669"/>
    <property type="project" value="TreeGrafter"/>
</dbReference>
<dbReference type="GO" id="GO:0045165">
    <property type="term" value="P:cell fate commitment"/>
    <property type="evidence" value="ECO:0007669"/>
    <property type="project" value="TreeGrafter"/>
</dbReference>
<dbReference type="GO" id="GO:0030182">
    <property type="term" value="P:neuron differentiation"/>
    <property type="evidence" value="ECO:0007669"/>
    <property type="project" value="TreeGrafter"/>
</dbReference>
<dbReference type="Gene3D" id="3.30.2460.20">
    <property type="match status" value="1"/>
</dbReference>
<dbReference type="InterPro" id="IPR005817">
    <property type="entry name" value="Wnt"/>
</dbReference>
<dbReference type="InterPro" id="IPR043158">
    <property type="entry name" value="Wnt_C"/>
</dbReference>
<dbReference type="PANTHER" id="PTHR12027:SF76">
    <property type="entry name" value="PROTEIN WNT-10B"/>
    <property type="match status" value="1"/>
</dbReference>
<dbReference type="PANTHER" id="PTHR12027">
    <property type="entry name" value="WNT RELATED"/>
    <property type="match status" value="1"/>
</dbReference>
<dbReference type="Pfam" id="PF00110">
    <property type="entry name" value="wnt"/>
    <property type="match status" value="1"/>
</dbReference>
<dbReference type="SMART" id="SM00097">
    <property type="entry name" value="WNT1"/>
    <property type="match status" value="1"/>
</dbReference>
<feature type="chain" id="PRO_0000200666" description="Protein Wnt-10b">
    <location>
        <begin position="1" status="less than"/>
        <end position="117" status="greater than"/>
    </location>
</feature>
<feature type="lipid moiety-binding region" description="O-palmitoleoyl serine; by PORCN" evidence="4">
    <location>
        <position position="1"/>
    </location>
</feature>
<feature type="glycosylation site" description="N-linked (GlcNAc...) asparagine" evidence="6">
    <location>
        <position position="84"/>
    </location>
</feature>
<feature type="disulfide bond" evidence="3">
    <location>
        <begin position="83"/>
        <end position="98"/>
    </location>
</feature>
<feature type="non-terminal residue">
    <location>
        <position position="1"/>
    </location>
</feature>
<feature type="non-terminal residue">
    <location>
        <position position="117"/>
    </location>
</feature>